<dbReference type="EMBL" id="AF198100">
    <property type="protein sequence ID" value="AAF44358.1"/>
    <property type="molecule type" value="Genomic_DNA"/>
</dbReference>
<dbReference type="RefSeq" id="NP_038977.1">
    <property type="nucleotide sequence ID" value="NC_002188.1"/>
</dbReference>
<dbReference type="SMR" id="Q9J5I7"/>
<dbReference type="GeneID" id="1486733"/>
<dbReference type="KEGG" id="vg:1486733"/>
<dbReference type="Proteomes" id="UP000008597">
    <property type="component" value="Segment"/>
</dbReference>
<dbReference type="Gene3D" id="1.25.40.20">
    <property type="entry name" value="Ankyrin repeat-containing domain"/>
    <property type="match status" value="2"/>
</dbReference>
<dbReference type="InterPro" id="IPR002110">
    <property type="entry name" value="Ankyrin_rpt"/>
</dbReference>
<dbReference type="InterPro" id="IPR036770">
    <property type="entry name" value="Ankyrin_rpt-contain_sf"/>
</dbReference>
<dbReference type="InterPro" id="IPR018272">
    <property type="entry name" value="PRANC_domain"/>
</dbReference>
<dbReference type="PANTHER" id="PTHR24198">
    <property type="entry name" value="ANKYRIN REPEAT AND PROTEIN KINASE DOMAIN-CONTAINING PROTEIN"/>
    <property type="match status" value="1"/>
</dbReference>
<dbReference type="PANTHER" id="PTHR24198:SF165">
    <property type="entry name" value="ANKYRIN REPEAT-CONTAINING PROTEIN-RELATED"/>
    <property type="match status" value="1"/>
</dbReference>
<dbReference type="Pfam" id="PF00023">
    <property type="entry name" value="Ank"/>
    <property type="match status" value="2"/>
</dbReference>
<dbReference type="Pfam" id="PF12796">
    <property type="entry name" value="Ank_2"/>
    <property type="match status" value="2"/>
</dbReference>
<dbReference type="Pfam" id="PF09372">
    <property type="entry name" value="PRANC"/>
    <property type="match status" value="1"/>
</dbReference>
<dbReference type="SMART" id="SM00248">
    <property type="entry name" value="ANK"/>
    <property type="match status" value="7"/>
</dbReference>
<dbReference type="SUPFAM" id="SSF48403">
    <property type="entry name" value="Ankyrin repeat"/>
    <property type="match status" value="1"/>
</dbReference>
<dbReference type="PROSITE" id="PS50297">
    <property type="entry name" value="ANK_REP_REGION"/>
    <property type="match status" value="1"/>
</dbReference>
<dbReference type="PROSITE" id="PS50088">
    <property type="entry name" value="ANK_REPEAT"/>
    <property type="match status" value="7"/>
</dbReference>
<name>V014_FOWPN</name>
<proteinExistence type="predicted"/>
<protein>
    <recommendedName>
        <fullName>Putative ankyrin repeat protein FPV014</fullName>
    </recommendedName>
</protein>
<organism>
    <name type="scientific">Fowlpox virus (strain NVSL)</name>
    <name type="common">FPV</name>
    <dbReference type="NCBI Taxonomy" id="928301"/>
    <lineage>
        <taxon>Viruses</taxon>
        <taxon>Varidnaviria</taxon>
        <taxon>Bamfordvirae</taxon>
        <taxon>Nucleocytoviricota</taxon>
        <taxon>Pokkesviricetes</taxon>
        <taxon>Chitovirales</taxon>
        <taxon>Poxviridae</taxon>
        <taxon>Chordopoxvirinae</taxon>
        <taxon>Avipoxvirus</taxon>
        <taxon>Fowlpox virus</taxon>
    </lineage>
</organism>
<feature type="chain" id="PRO_0000067103" description="Putative ankyrin repeat protein FPV014">
    <location>
        <begin position="1"/>
        <end position="437"/>
    </location>
</feature>
<feature type="repeat" description="ANK 1">
    <location>
        <begin position="32"/>
        <end position="61"/>
    </location>
</feature>
<feature type="repeat" description="ANK 2">
    <location>
        <begin position="65"/>
        <end position="94"/>
    </location>
</feature>
<feature type="repeat" description="ANK 3">
    <location>
        <begin position="99"/>
        <end position="128"/>
    </location>
</feature>
<feature type="repeat" description="ANK 4">
    <location>
        <begin position="131"/>
        <end position="160"/>
    </location>
</feature>
<feature type="repeat" description="ANK 5">
    <location>
        <begin position="164"/>
        <end position="195"/>
    </location>
</feature>
<feature type="repeat" description="ANK 6">
    <location>
        <begin position="197"/>
        <end position="226"/>
    </location>
</feature>
<feature type="repeat" description="ANK 7">
    <location>
        <begin position="230"/>
        <end position="259"/>
    </location>
</feature>
<accession>Q9J5I7</accession>
<reference key="1">
    <citation type="journal article" date="2000" name="J. Virol.">
        <title>The genome of fowlpox virus.</title>
        <authorList>
            <person name="Afonso C.L."/>
            <person name="Tulman E.R."/>
            <person name="Lu Z."/>
            <person name="Zsak L."/>
            <person name="Kutish G.F."/>
            <person name="Rock D.L."/>
        </authorList>
    </citation>
    <scope>NUCLEOTIDE SEQUENCE [LARGE SCALE GENOMIC DNA]</scope>
</reference>
<keyword id="KW-0040">ANK repeat</keyword>
<keyword id="KW-1185">Reference proteome</keyword>
<keyword id="KW-0677">Repeat</keyword>
<sequence length="437" mass="49081">MEVFEAIESGCVSDVIKALKGNDSDPNMVNEYGCSLLHCAVENGNTEIARILLLEGANPDLYTESTPTALHRAVILRHYDIVNLLMEFNVDPDNYENHESRTPLEYAVKLNDVKMTKTLLDYGADAEDIYRFNCPINDAAANGNLEICKLLIDAGARINSRSMGSVYTIHHAIRSGNYELVVELLSRGALPDVEDELSFSSLHHAVMEGSADMVLTLLEHGASVDVQDFCGRTPLFLAANASELDIVKVLLDFWADTSVSSGRNTPLSVCDLNSDTGIEIAKQIISTMVINTEYKYHKVINEEARRNDLEIIESNNEMKDWKDSCIEEVEKMRKTTLGSDRRSLLDLCLNCDDNAIAKCLNCISCEGFFIYRQLIEYTIERGLLRHESLDKALDVMEKAFEKNRNVKDNGLKDWSDLPLGIKYDILEKIDEEDLPYC</sequence>
<organismHost>
    <name type="scientific">Vertebrata</name>
    <dbReference type="NCBI Taxonomy" id="7742"/>
</organismHost>
<gene>
    <name type="ordered locus">FPV014</name>
</gene>